<comment type="function">
    <text evidence="1">A GTPase-activating protein (GAP) that modifies Der/EngA GTPase function. May play a role in ribosome biogenesis.</text>
</comment>
<comment type="subunit">
    <text evidence="1">Interacts with Der.</text>
</comment>
<comment type="similarity">
    <text evidence="1">Belongs to the YihI family.</text>
</comment>
<gene>
    <name evidence="1" type="primary">yihI</name>
    <name type="ordered locus">ECED1_4566</name>
</gene>
<name>YIHI_ECO81</name>
<proteinExistence type="inferred from homology"/>
<organism>
    <name type="scientific">Escherichia coli O81 (strain ED1a)</name>
    <dbReference type="NCBI Taxonomy" id="585397"/>
    <lineage>
        <taxon>Bacteria</taxon>
        <taxon>Pseudomonadati</taxon>
        <taxon>Pseudomonadota</taxon>
        <taxon>Gammaproteobacteria</taxon>
        <taxon>Enterobacterales</taxon>
        <taxon>Enterobacteriaceae</taxon>
        <taxon>Escherichia</taxon>
    </lineage>
</organism>
<keyword id="KW-0343">GTPase activation</keyword>
<keyword id="KW-0690">Ribosome biogenesis</keyword>
<feature type="chain" id="PRO_1000149675" description="Der GTPase-activating protein YihI">
    <location>
        <begin position="1"/>
        <end position="169"/>
    </location>
</feature>
<feature type="region of interest" description="Disordered" evidence="2">
    <location>
        <begin position="1"/>
        <end position="99"/>
    </location>
</feature>
<feature type="region of interest" description="Disordered" evidence="2">
    <location>
        <begin position="146"/>
        <end position="169"/>
    </location>
</feature>
<feature type="compositionally biased region" description="Basic residues" evidence="2">
    <location>
        <begin position="10"/>
        <end position="19"/>
    </location>
</feature>
<feature type="compositionally biased region" description="Basic and acidic residues" evidence="2">
    <location>
        <begin position="20"/>
        <end position="30"/>
    </location>
</feature>
<feature type="compositionally biased region" description="Basic residues" evidence="2">
    <location>
        <begin position="31"/>
        <end position="40"/>
    </location>
</feature>
<feature type="compositionally biased region" description="Polar residues" evidence="2">
    <location>
        <begin position="49"/>
        <end position="58"/>
    </location>
</feature>
<feature type="compositionally biased region" description="Acidic residues" evidence="2">
    <location>
        <begin position="147"/>
        <end position="159"/>
    </location>
</feature>
<feature type="compositionally biased region" description="Basic and acidic residues" evidence="2">
    <location>
        <begin position="160"/>
        <end position="169"/>
    </location>
</feature>
<sequence length="169" mass="19057">MKPSSSNSRSKGHAKARRKTREELDQEARDRKRQKKRRGHAPGSRAAGGNTTSGSKGQNAPKDPRIGSKTPIPLGVAEKVTKQHKPKSEKPMLSPQAELELLETDERLDALLERLEAGETLSAEEQSWVDVKLDRIDELMQKLGLSYDDDEEEEEDEKQEDMMRLLRGN</sequence>
<reference key="1">
    <citation type="journal article" date="2009" name="PLoS Genet.">
        <title>Organised genome dynamics in the Escherichia coli species results in highly diverse adaptive paths.</title>
        <authorList>
            <person name="Touchon M."/>
            <person name="Hoede C."/>
            <person name="Tenaillon O."/>
            <person name="Barbe V."/>
            <person name="Baeriswyl S."/>
            <person name="Bidet P."/>
            <person name="Bingen E."/>
            <person name="Bonacorsi S."/>
            <person name="Bouchier C."/>
            <person name="Bouvet O."/>
            <person name="Calteau A."/>
            <person name="Chiapello H."/>
            <person name="Clermont O."/>
            <person name="Cruveiller S."/>
            <person name="Danchin A."/>
            <person name="Diard M."/>
            <person name="Dossat C."/>
            <person name="Karoui M.E."/>
            <person name="Frapy E."/>
            <person name="Garry L."/>
            <person name="Ghigo J.M."/>
            <person name="Gilles A.M."/>
            <person name="Johnson J."/>
            <person name="Le Bouguenec C."/>
            <person name="Lescat M."/>
            <person name="Mangenot S."/>
            <person name="Martinez-Jehanne V."/>
            <person name="Matic I."/>
            <person name="Nassif X."/>
            <person name="Oztas S."/>
            <person name="Petit M.A."/>
            <person name="Pichon C."/>
            <person name="Rouy Z."/>
            <person name="Ruf C.S."/>
            <person name="Schneider D."/>
            <person name="Tourret J."/>
            <person name="Vacherie B."/>
            <person name="Vallenet D."/>
            <person name="Medigue C."/>
            <person name="Rocha E.P.C."/>
            <person name="Denamur E."/>
        </authorList>
    </citation>
    <scope>NUCLEOTIDE SEQUENCE [LARGE SCALE GENOMIC DNA]</scope>
    <source>
        <strain>ED1a</strain>
    </source>
</reference>
<accession>B7N2G7</accession>
<evidence type="ECO:0000255" key="1">
    <source>
        <dbReference type="HAMAP-Rule" id="MF_01058"/>
    </source>
</evidence>
<evidence type="ECO:0000256" key="2">
    <source>
        <dbReference type="SAM" id="MobiDB-lite"/>
    </source>
</evidence>
<dbReference type="EMBL" id="CU928162">
    <property type="protein sequence ID" value="CAR10538.1"/>
    <property type="molecule type" value="Genomic_DNA"/>
</dbReference>
<dbReference type="RefSeq" id="WP_001351246.1">
    <property type="nucleotide sequence ID" value="NC_011745.1"/>
</dbReference>
<dbReference type="SMR" id="B7N2G7"/>
<dbReference type="KEGG" id="ecq:ECED1_4566"/>
<dbReference type="HOGENOM" id="CLU_094104_2_0_6"/>
<dbReference type="Proteomes" id="UP000000748">
    <property type="component" value="Chromosome"/>
</dbReference>
<dbReference type="GO" id="GO:0005096">
    <property type="term" value="F:GTPase activator activity"/>
    <property type="evidence" value="ECO:0007669"/>
    <property type="project" value="UniProtKB-KW"/>
</dbReference>
<dbReference type="GO" id="GO:0042254">
    <property type="term" value="P:ribosome biogenesis"/>
    <property type="evidence" value="ECO:0007669"/>
    <property type="project" value="UniProtKB-KW"/>
</dbReference>
<dbReference type="HAMAP" id="MF_01058">
    <property type="entry name" value="GAP_YihI"/>
    <property type="match status" value="1"/>
</dbReference>
<dbReference type="InterPro" id="IPR007336">
    <property type="entry name" value="YihI"/>
</dbReference>
<dbReference type="NCBIfam" id="NF003560">
    <property type="entry name" value="PRK05244.1-1"/>
    <property type="match status" value="1"/>
</dbReference>
<dbReference type="Pfam" id="PF04220">
    <property type="entry name" value="YihI"/>
    <property type="match status" value="1"/>
</dbReference>
<protein>
    <recommendedName>
        <fullName evidence="1">Der GTPase-activating protein YihI</fullName>
    </recommendedName>
</protein>